<protein>
    <recommendedName>
        <fullName>DNA-directed RNA polymerase subunit omega</fullName>
        <shortName>RNAP omega subunit</shortName>
        <ecNumber>2.7.7.6</ecNumber>
    </recommendedName>
    <alternativeName>
        <fullName>RNA polymerase omega subunit</fullName>
    </alternativeName>
    <alternativeName>
        <fullName>Transcriptase subunit omega</fullName>
    </alternativeName>
</protein>
<proteinExistence type="inferred from homology"/>
<organism>
    <name type="scientific">Escherichia coli O6:H1 (strain CFT073 / ATCC 700928 / UPEC)</name>
    <dbReference type="NCBI Taxonomy" id="199310"/>
    <lineage>
        <taxon>Bacteria</taxon>
        <taxon>Pseudomonadati</taxon>
        <taxon>Pseudomonadota</taxon>
        <taxon>Gammaproteobacteria</taxon>
        <taxon>Enterobacterales</taxon>
        <taxon>Enterobacteriaceae</taxon>
        <taxon>Escherichia</taxon>
    </lineage>
</organism>
<feature type="chain" id="PRO_0000128937" description="DNA-directed RNA polymerase subunit omega">
    <location>
        <begin position="1"/>
        <end position="91"/>
    </location>
</feature>
<dbReference type="EC" id="2.7.7.6"/>
<dbReference type="EMBL" id="AE014075">
    <property type="protein sequence ID" value="AAN82910.1"/>
    <property type="molecule type" value="Genomic_DNA"/>
</dbReference>
<dbReference type="RefSeq" id="WP_000135058.1">
    <property type="nucleotide sequence ID" value="NZ_CP051263.1"/>
</dbReference>
<dbReference type="SMR" id="P0A801"/>
<dbReference type="STRING" id="199310.c4474"/>
<dbReference type="GeneID" id="98390719"/>
<dbReference type="KEGG" id="ecc:c4474"/>
<dbReference type="eggNOG" id="COG1758">
    <property type="taxonomic scope" value="Bacteria"/>
</dbReference>
<dbReference type="HOGENOM" id="CLU_125406_5_3_6"/>
<dbReference type="BioCyc" id="ECOL199310:C4474-MONOMER"/>
<dbReference type="Proteomes" id="UP000001410">
    <property type="component" value="Chromosome"/>
</dbReference>
<dbReference type="GO" id="GO:0000428">
    <property type="term" value="C:DNA-directed RNA polymerase complex"/>
    <property type="evidence" value="ECO:0007669"/>
    <property type="project" value="UniProtKB-KW"/>
</dbReference>
<dbReference type="GO" id="GO:0003677">
    <property type="term" value="F:DNA binding"/>
    <property type="evidence" value="ECO:0007669"/>
    <property type="project" value="UniProtKB-UniRule"/>
</dbReference>
<dbReference type="GO" id="GO:0003899">
    <property type="term" value="F:DNA-directed RNA polymerase activity"/>
    <property type="evidence" value="ECO:0007669"/>
    <property type="project" value="UniProtKB-UniRule"/>
</dbReference>
<dbReference type="GO" id="GO:0006351">
    <property type="term" value="P:DNA-templated transcription"/>
    <property type="evidence" value="ECO:0007669"/>
    <property type="project" value="UniProtKB-UniRule"/>
</dbReference>
<dbReference type="FunFam" id="3.90.940.10:FF:000001">
    <property type="entry name" value="DNA-directed RNA polymerase subunit omega"/>
    <property type="match status" value="1"/>
</dbReference>
<dbReference type="Gene3D" id="3.90.940.10">
    <property type="match status" value="1"/>
</dbReference>
<dbReference type="HAMAP" id="MF_00366">
    <property type="entry name" value="RNApol_bact_RpoZ"/>
    <property type="match status" value="1"/>
</dbReference>
<dbReference type="InterPro" id="IPR003716">
    <property type="entry name" value="DNA-dir_RNA_pol_omega"/>
</dbReference>
<dbReference type="InterPro" id="IPR006110">
    <property type="entry name" value="Pol_omega/Rpo6/RPB6"/>
</dbReference>
<dbReference type="InterPro" id="IPR036161">
    <property type="entry name" value="RPB6/omega-like_sf"/>
</dbReference>
<dbReference type="NCBIfam" id="TIGR00690">
    <property type="entry name" value="rpoZ"/>
    <property type="match status" value="1"/>
</dbReference>
<dbReference type="PANTHER" id="PTHR34476">
    <property type="entry name" value="DNA-DIRECTED RNA POLYMERASE SUBUNIT OMEGA"/>
    <property type="match status" value="1"/>
</dbReference>
<dbReference type="PANTHER" id="PTHR34476:SF1">
    <property type="entry name" value="DNA-DIRECTED RNA POLYMERASE SUBUNIT OMEGA"/>
    <property type="match status" value="1"/>
</dbReference>
<dbReference type="Pfam" id="PF01192">
    <property type="entry name" value="RNA_pol_Rpb6"/>
    <property type="match status" value="1"/>
</dbReference>
<dbReference type="SMART" id="SM01409">
    <property type="entry name" value="RNA_pol_Rpb6"/>
    <property type="match status" value="1"/>
</dbReference>
<dbReference type="SUPFAM" id="SSF63562">
    <property type="entry name" value="RPB6/omega subunit-like"/>
    <property type="match status" value="1"/>
</dbReference>
<comment type="function">
    <text evidence="1">Promotes RNA polymerase assembly. Latches the N- and C-terminal regions of the beta' subunit thereby facilitating its interaction with the beta and alpha subunits (By similarity).</text>
</comment>
<comment type="catalytic activity">
    <reaction>
        <text>RNA(n) + a ribonucleoside 5'-triphosphate = RNA(n+1) + diphosphate</text>
        <dbReference type="Rhea" id="RHEA:21248"/>
        <dbReference type="Rhea" id="RHEA-COMP:14527"/>
        <dbReference type="Rhea" id="RHEA-COMP:17342"/>
        <dbReference type="ChEBI" id="CHEBI:33019"/>
        <dbReference type="ChEBI" id="CHEBI:61557"/>
        <dbReference type="ChEBI" id="CHEBI:140395"/>
        <dbReference type="EC" id="2.7.7.6"/>
    </reaction>
</comment>
<comment type="subunit">
    <text evidence="1">The RNAP catalytic core consists of 2 alpha, 1 beta, 1 beta' and 1 omega subunit. When a sigma factor is associated with the core the holoenzyme is formed, which can initiate transcription (By similarity).</text>
</comment>
<comment type="similarity">
    <text evidence="2">Belongs to the RNA polymerase subunit omega family.</text>
</comment>
<name>RPOZ_ECOL6</name>
<evidence type="ECO:0000250" key="1"/>
<evidence type="ECO:0000305" key="2"/>
<sequence length="91" mass="10237">MARVTVQDAVEKIGNRFDLVLVAARRARQMQVGGKDPLVPEENDKTTVIALREIEEGLINNQILDVRERQEQQEQEAAELQAVTAIAEGRR</sequence>
<reference key="1">
    <citation type="journal article" date="2002" name="Proc. Natl. Acad. Sci. U.S.A.">
        <title>Extensive mosaic structure revealed by the complete genome sequence of uropathogenic Escherichia coli.</title>
        <authorList>
            <person name="Welch R.A."/>
            <person name="Burland V."/>
            <person name="Plunkett G. III"/>
            <person name="Redford P."/>
            <person name="Roesch P."/>
            <person name="Rasko D."/>
            <person name="Buckles E.L."/>
            <person name="Liou S.-R."/>
            <person name="Boutin A."/>
            <person name="Hackett J."/>
            <person name="Stroud D."/>
            <person name="Mayhew G.F."/>
            <person name="Rose D.J."/>
            <person name="Zhou S."/>
            <person name="Schwartz D.C."/>
            <person name="Perna N.T."/>
            <person name="Mobley H.L.T."/>
            <person name="Donnenberg M.S."/>
            <person name="Blattner F.R."/>
        </authorList>
    </citation>
    <scope>NUCLEOTIDE SEQUENCE [LARGE SCALE GENOMIC DNA]</scope>
    <source>
        <strain>CFT073 / ATCC 700928 / UPEC</strain>
    </source>
</reference>
<keyword id="KW-0240">DNA-directed RNA polymerase</keyword>
<keyword id="KW-0548">Nucleotidyltransferase</keyword>
<keyword id="KW-1185">Reference proteome</keyword>
<keyword id="KW-0804">Transcription</keyword>
<keyword id="KW-0808">Transferase</keyword>
<accession>P0A801</accession>
<accession>P08374</accession>
<gene>
    <name type="primary">rpoZ</name>
    <name type="ordered locus">c4474</name>
</gene>